<reference key="1">
    <citation type="journal article" date="2015" name="Genome Announc.">
        <title>Complete Genome Sequence of Methanosphaerula palustris E1-9CT, a Hydrogenotrophic Methanogen Isolated from a Minerotrophic Fen Peatland.</title>
        <authorList>
            <person name="Cadillo-Quiroz H."/>
            <person name="Browne P."/>
            <person name="Kyrpides N."/>
            <person name="Woyke T."/>
            <person name="Goodwin L."/>
            <person name="Detter C."/>
            <person name="Yavitt J.B."/>
            <person name="Zinder S.H."/>
        </authorList>
    </citation>
    <scope>NUCLEOTIDE SEQUENCE [LARGE SCALE GENOMIC DNA]</scope>
    <source>
        <strain>ATCC BAA-1556 / DSM 19958 / E1-9c</strain>
    </source>
</reference>
<evidence type="ECO:0000255" key="1">
    <source>
        <dbReference type="HAMAP-Rule" id="MF_01028"/>
    </source>
</evidence>
<evidence type="ECO:0000255" key="2">
    <source>
        <dbReference type="PROSITE-ProRule" id="PRU01151"/>
    </source>
</evidence>
<comment type="function">
    <text evidence="1">Catalyzes the condensation of pyruvate and acetyl-coenzyme A to form (R)-citramalate.</text>
</comment>
<comment type="catalytic activity">
    <reaction evidence="1">
        <text>pyruvate + acetyl-CoA + H2O = (3R)-citramalate + CoA + H(+)</text>
        <dbReference type="Rhea" id="RHEA:19045"/>
        <dbReference type="ChEBI" id="CHEBI:15361"/>
        <dbReference type="ChEBI" id="CHEBI:15377"/>
        <dbReference type="ChEBI" id="CHEBI:15378"/>
        <dbReference type="ChEBI" id="CHEBI:30934"/>
        <dbReference type="ChEBI" id="CHEBI:57287"/>
        <dbReference type="ChEBI" id="CHEBI:57288"/>
        <dbReference type="EC" id="2.3.3.21"/>
    </reaction>
</comment>
<comment type="pathway">
    <text evidence="1">Amino-acid biosynthesis; L-isoleucine biosynthesis; 2-oxobutanoate from pyruvate: step 1/3.</text>
</comment>
<comment type="subunit">
    <text evidence="1">Homodimer.</text>
</comment>
<comment type="similarity">
    <text evidence="1">Belongs to the alpha-IPM synthase/homocitrate synthase family.</text>
</comment>
<accession>B8GEI1</accession>
<dbReference type="EC" id="2.3.3.21" evidence="1"/>
<dbReference type="EMBL" id="CP001338">
    <property type="protein sequence ID" value="ACL17682.1"/>
    <property type="molecule type" value="Genomic_DNA"/>
</dbReference>
<dbReference type="RefSeq" id="WP_012619001.1">
    <property type="nucleotide sequence ID" value="NC_011832.1"/>
</dbReference>
<dbReference type="SMR" id="B8GEI1"/>
<dbReference type="STRING" id="521011.Mpal_2402"/>
<dbReference type="GeneID" id="7272125"/>
<dbReference type="KEGG" id="mpl:Mpal_2402"/>
<dbReference type="eggNOG" id="arCOG02092">
    <property type="taxonomic scope" value="Archaea"/>
</dbReference>
<dbReference type="HOGENOM" id="CLU_022158_0_1_2"/>
<dbReference type="OrthoDB" id="6555at2157"/>
<dbReference type="UniPathway" id="UPA00047">
    <property type="reaction ID" value="UER00066"/>
</dbReference>
<dbReference type="Proteomes" id="UP000002457">
    <property type="component" value="Chromosome"/>
</dbReference>
<dbReference type="GO" id="GO:0043714">
    <property type="term" value="F:(R)-citramalate synthase activity"/>
    <property type="evidence" value="ECO:0007669"/>
    <property type="project" value="InterPro"/>
</dbReference>
<dbReference type="GO" id="GO:0003852">
    <property type="term" value="F:2-isopropylmalate synthase activity"/>
    <property type="evidence" value="ECO:0007669"/>
    <property type="project" value="InterPro"/>
</dbReference>
<dbReference type="GO" id="GO:0009097">
    <property type="term" value="P:isoleucine biosynthetic process"/>
    <property type="evidence" value="ECO:0007669"/>
    <property type="project" value="UniProtKB-UniRule"/>
</dbReference>
<dbReference type="GO" id="GO:0009098">
    <property type="term" value="P:L-leucine biosynthetic process"/>
    <property type="evidence" value="ECO:0007669"/>
    <property type="project" value="InterPro"/>
</dbReference>
<dbReference type="CDD" id="cd07940">
    <property type="entry name" value="DRE_TIM_IPMS"/>
    <property type="match status" value="1"/>
</dbReference>
<dbReference type="FunFam" id="1.10.238.260:FF:000001">
    <property type="entry name" value="2-isopropylmalate synthase"/>
    <property type="match status" value="1"/>
</dbReference>
<dbReference type="FunFam" id="3.20.20.70:FF:000010">
    <property type="entry name" value="2-isopropylmalate synthase"/>
    <property type="match status" value="1"/>
</dbReference>
<dbReference type="Gene3D" id="1.10.238.260">
    <property type="match status" value="1"/>
</dbReference>
<dbReference type="Gene3D" id="3.30.160.270">
    <property type="match status" value="1"/>
</dbReference>
<dbReference type="Gene3D" id="3.20.20.70">
    <property type="entry name" value="Aldolase class I"/>
    <property type="match status" value="1"/>
</dbReference>
<dbReference type="HAMAP" id="MF_01028">
    <property type="entry name" value="CimA"/>
    <property type="match status" value="1"/>
</dbReference>
<dbReference type="InterPro" id="IPR013709">
    <property type="entry name" value="2-isopropylmalate_synth_dimer"/>
</dbReference>
<dbReference type="InterPro" id="IPR002034">
    <property type="entry name" value="AIPM/Hcit_synth_CS"/>
</dbReference>
<dbReference type="InterPro" id="IPR013785">
    <property type="entry name" value="Aldolase_TIM"/>
</dbReference>
<dbReference type="InterPro" id="IPR024890">
    <property type="entry name" value="Citramalate_synthase_CimA"/>
</dbReference>
<dbReference type="InterPro" id="IPR011830">
    <property type="entry name" value="LEU1_arch"/>
</dbReference>
<dbReference type="InterPro" id="IPR054691">
    <property type="entry name" value="LeuA/HCS_post-cat"/>
</dbReference>
<dbReference type="InterPro" id="IPR036230">
    <property type="entry name" value="LeuA_allosteric_dom_sf"/>
</dbReference>
<dbReference type="InterPro" id="IPR000891">
    <property type="entry name" value="PYR_CT"/>
</dbReference>
<dbReference type="NCBIfam" id="TIGR02090">
    <property type="entry name" value="LEU1_arch"/>
    <property type="match status" value="1"/>
</dbReference>
<dbReference type="NCBIfam" id="NF002085">
    <property type="entry name" value="PRK00915.1-2"/>
    <property type="match status" value="1"/>
</dbReference>
<dbReference type="PANTHER" id="PTHR42880:SF2">
    <property type="entry name" value="(R)-CITRAMALATE SYNTHASE CIMA"/>
    <property type="match status" value="1"/>
</dbReference>
<dbReference type="PANTHER" id="PTHR42880">
    <property type="entry name" value="HOMOCITRATE SYNTHASE"/>
    <property type="match status" value="1"/>
</dbReference>
<dbReference type="Pfam" id="PF22617">
    <property type="entry name" value="HCS_D2"/>
    <property type="match status" value="1"/>
</dbReference>
<dbReference type="Pfam" id="PF00682">
    <property type="entry name" value="HMGL-like"/>
    <property type="match status" value="1"/>
</dbReference>
<dbReference type="Pfam" id="PF08502">
    <property type="entry name" value="LeuA_dimer"/>
    <property type="match status" value="1"/>
</dbReference>
<dbReference type="SMART" id="SM00917">
    <property type="entry name" value="LeuA_dimer"/>
    <property type="match status" value="1"/>
</dbReference>
<dbReference type="SUPFAM" id="SSF110921">
    <property type="entry name" value="2-isopropylmalate synthase LeuA, allosteric (dimerisation) domain"/>
    <property type="match status" value="1"/>
</dbReference>
<dbReference type="SUPFAM" id="SSF51569">
    <property type="entry name" value="Aldolase"/>
    <property type="match status" value="1"/>
</dbReference>
<dbReference type="PROSITE" id="PS00815">
    <property type="entry name" value="AIPM_HOMOCIT_SYNTH_1"/>
    <property type="match status" value="1"/>
</dbReference>
<dbReference type="PROSITE" id="PS00816">
    <property type="entry name" value="AIPM_HOMOCIT_SYNTH_2"/>
    <property type="match status" value="1"/>
</dbReference>
<dbReference type="PROSITE" id="PS50991">
    <property type="entry name" value="PYR_CT"/>
    <property type="match status" value="1"/>
</dbReference>
<proteinExistence type="inferred from homology"/>
<sequence length="500" mass="52466">MIALFGEKLRFFDTTLRDGEQTPGVSLTPDQKCIIATALAAVGVDVIEAGSAAASPGDRAAIRQIANAGLGVEVCTFVRAMTGDIDAAVECGVDSVHLVVPVSDLHIQKKLRKDRATVAAMANKAVDYAKERGLIVELSGEDASRADQSFLAEVFASGVEHGADRLCFCDTVGLMTPERTALMIPPLAAIAPLSIHCHDDLGFGLATTIAALKAGASCAHVTVNGLGERAGNTPLEEVVMALERLYGYDTRIRTERLYPLSVLVSRLTGVPLPAQKPIVGELAFTHESGIHADGILKDPSTYEPLAPETVGRTRRIILGKHSGSASVEAALQESGYRPTPAQLQVIVARVKHLGDQGHRVTDGDLAAIAEAVLEVSTEPVLVLKQFTVVSGSGVLPTASVTLLVNGAEVTNAATGTGPVDAAIEALRRSVADVAAISLLEYHVDAITGGTDALVEVTATLSNGEMTRTSRGAETDIIAASVEAVVQGMNRLLRRRDEDRR</sequence>
<protein>
    <recommendedName>
        <fullName evidence="1">Putative (R)-citramalate synthase CimA</fullName>
        <ecNumber evidence="1">2.3.3.21</ecNumber>
    </recommendedName>
</protein>
<organism>
    <name type="scientific">Methanosphaerula palustris (strain ATCC BAA-1556 / DSM 19958 / E1-9c)</name>
    <dbReference type="NCBI Taxonomy" id="521011"/>
    <lineage>
        <taxon>Archaea</taxon>
        <taxon>Methanobacteriati</taxon>
        <taxon>Methanobacteriota</taxon>
        <taxon>Stenosarchaea group</taxon>
        <taxon>Methanomicrobia</taxon>
        <taxon>Methanomicrobiales</taxon>
        <taxon>Methanoregulaceae</taxon>
        <taxon>Methanosphaerula</taxon>
    </lineage>
</organism>
<keyword id="KW-0028">Amino-acid biosynthesis</keyword>
<keyword id="KW-0100">Branched-chain amino acid biosynthesis</keyword>
<keyword id="KW-0412">Isoleucine biosynthesis</keyword>
<keyword id="KW-1185">Reference proteome</keyword>
<keyword id="KW-0808">Transferase</keyword>
<feature type="chain" id="PRO_0000407914" description="Putative (R)-citramalate synthase CimA">
    <location>
        <begin position="1"/>
        <end position="500"/>
    </location>
</feature>
<feature type="domain" description="Pyruvate carboxyltransferase" evidence="2">
    <location>
        <begin position="9"/>
        <end position="258"/>
    </location>
</feature>
<gene>
    <name evidence="1" type="primary">cimA</name>
    <name type="ordered locus">Mpal_2402</name>
</gene>
<name>CIMA_METPE</name>